<name>SYT_SYNS3</name>
<comment type="function">
    <text evidence="1">Catalyzes the attachment of threonine to tRNA(Thr) in a two-step reaction: L-threonine is first activated by ATP to form Thr-AMP and then transferred to the acceptor end of tRNA(Thr). Also edits incorrectly charged L-seryl-tRNA(Thr).</text>
</comment>
<comment type="catalytic activity">
    <reaction evidence="1">
        <text>tRNA(Thr) + L-threonine + ATP = L-threonyl-tRNA(Thr) + AMP + diphosphate + H(+)</text>
        <dbReference type="Rhea" id="RHEA:24624"/>
        <dbReference type="Rhea" id="RHEA-COMP:9670"/>
        <dbReference type="Rhea" id="RHEA-COMP:9704"/>
        <dbReference type="ChEBI" id="CHEBI:15378"/>
        <dbReference type="ChEBI" id="CHEBI:30616"/>
        <dbReference type="ChEBI" id="CHEBI:33019"/>
        <dbReference type="ChEBI" id="CHEBI:57926"/>
        <dbReference type="ChEBI" id="CHEBI:78442"/>
        <dbReference type="ChEBI" id="CHEBI:78534"/>
        <dbReference type="ChEBI" id="CHEBI:456215"/>
        <dbReference type="EC" id="6.1.1.3"/>
    </reaction>
</comment>
<comment type="cofactor">
    <cofactor evidence="1">
        <name>Zn(2+)</name>
        <dbReference type="ChEBI" id="CHEBI:29105"/>
    </cofactor>
    <text evidence="1">Binds 1 zinc ion per subunit.</text>
</comment>
<comment type="subunit">
    <text evidence="1">Homodimer.</text>
</comment>
<comment type="subcellular location">
    <subcellularLocation>
        <location evidence="1">Cytoplasm</location>
    </subcellularLocation>
</comment>
<comment type="similarity">
    <text evidence="1">Belongs to the class-II aminoacyl-tRNA synthetase family.</text>
</comment>
<evidence type="ECO:0000255" key="1">
    <source>
        <dbReference type="HAMAP-Rule" id="MF_00184"/>
    </source>
</evidence>
<feature type="chain" id="PRO_1000020540" description="Threonine--tRNA ligase">
    <location>
        <begin position="1"/>
        <end position="617"/>
    </location>
</feature>
<feature type="region of interest" description="Catalytic" evidence="1">
    <location>
        <begin position="209"/>
        <end position="502"/>
    </location>
</feature>
<feature type="binding site" evidence="1">
    <location>
        <position position="302"/>
    </location>
    <ligand>
        <name>Zn(2+)</name>
        <dbReference type="ChEBI" id="CHEBI:29105"/>
    </ligand>
</feature>
<feature type="binding site" evidence="1">
    <location>
        <position position="353"/>
    </location>
    <ligand>
        <name>Zn(2+)</name>
        <dbReference type="ChEBI" id="CHEBI:29105"/>
    </ligand>
</feature>
<feature type="binding site" evidence="1">
    <location>
        <position position="479"/>
    </location>
    <ligand>
        <name>Zn(2+)</name>
        <dbReference type="ChEBI" id="CHEBI:29105"/>
    </ligand>
</feature>
<dbReference type="EC" id="6.1.1.3" evidence="1"/>
<dbReference type="EMBL" id="CP000435">
    <property type="protein sequence ID" value="ABI46529.1"/>
    <property type="molecule type" value="Genomic_DNA"/>
</dbReference>
<dbReference type="RefSeq" id="WP_011619783.1">
    <property type="nucleotide sequence ID" value="NC_008319.1"/>
</dbReference>
<dbReference type="SMR" id="Q0I902"/>
<dbReference type="STRING" id="64471.sync_1866"/>
<dbReference type="KEGG" id="syg:sync_1866"/>
<dbReference type="eggNOG" id="COG0441">
    <property type="taxonomic scope" value="Bacteria"/>
</dbReference>
<dbReference type="HOGENOM" id="CLU_008554_0_1_3"/>
<dbReference type="OrthoDB" id="9802304at2"/>
<dbReference type="Proteomes" id="UP000001961">
    <property type="component" value="Chromosome"/>
</dbReference>
<dbReference type="GO" id="GO:0005737">
    <property type="term" value="C:cytoplasm"/>
    <property type="evidence" value="ECO:0007669"/>
    <property type="project" value="UniProtKB-SubCell"/>
</dbReference>
<dbReference type="GO" id="GO:0005524">
    <property type="term" value="F:ATP binding"/>
    <property type="evidence" value="ECO:0007669"/>
    <property type="project" value="UniProtKB-UniRule"/>
</dbReference>
<dbReference type="GO" id="GO:0046872">
    <property type="term" value="F:metal ion binding"/>
    <property type="evidence" value="ECO:0007669"/>
    <property type="project" value="UniProtKB-KW"/>
</dbReference>
<dbReference type="GO" id="GO:0004829">
    <property type="term" value="F:threonine-tRNA ligase activity"/>
    <property type="evidence" value="ECO:0007669"/>
    <property type="project" value="UniProtKB-UniRule"/>
</dbReference>
<dbReference type="GO" id="GO:0000049">
    <property type="term" value="F:tRNA binding"/>
    <property type="evidence" value="ECO:0007669"/>
    <property type="project" value="UniProtKB-KW"/>
</dbReference>
<dbReference type="GO" id="GO:0006435">
    <property type="term" value="P:threonyl-tRNA aminoacylation"/>
    <property type="evidence" value="ECO:0007669"/>
    <property type="project" value="UniProtKB-UniRule"/>
</dbReference>
<dbReference type="CDD" id="cd00860">
    <property type="entry name" value="ThrRS_anticodon"/>
    <property type="match status" value="1"/>
</dbReference>
<dbReference type="CDD" id="cd00771">
    <property type="entry name" value="ThrRS_core"/>
    <property type="match status" value="1"/>
</dbReference>
<dbReference type="FunFam" id="3.30.54.20:FF:000002">
    <property type="entry name" value="Threonine--tRNA ligase"/>
    <property type="match status" value="1"/>
</dbReference>
<dbReference type="FunFam" id="3.30.930.10:FF:000002">
    <property type="entry name" value="Threonine--tRNA ligase"/>
    <property type="match status" value="1"/>
</dbReference>
<dbReference type="FunFam" id="3.40.50.800:FF:000001">
    <property type="entry name" value="Threonine--tRNA ligase"/>
    <property type="match status" value="1"/>
</dbReference>
<dbReference type="Gene3D" id="3.30.54.20">
    <property type="match status" value="1"/>
</dbReference>
<dbReference type="Gene3D" id="3.40.50.800">
    <property type="entry name" value="Anticodon-binding domain"/>
    <property type="match status" value="1"/>
</dbReference>
<dbReference type="Gene3D" id="3.30.930.10">
    <property type="entry name" value="Bira Bifunctional Protein, Domain 2"/>
    <property type="match status" value="1"/>
</dbReference>
<dbReference type="Gene3D" id="3.30.980.10">
    <property type="entry name" value="Threonyl-trna Synthetase, Chain A, domain 2"/>
    <property type="match status" value="1"/>
</dbReference>
<dbReference type="HAMAP" id="MF_00184">
    <property type="entry name" value="Thr_tRNA_synth"/>
    <property type="match status" value="1"/>
</dbReference>
<dbReference type="InterPro" id="IPR002314">
    <property type="entry name" value="aa-tRNA-synt_IIb"/>
</dbReference>
<dbReference type="InterPro" id="IPR006195">
    <property type="entry name" value="aa-tRNA-synth_II"/>
</dbReference>
<dbReference type="InterPro" id="IPR045864">
    <property type="entry name" value="aa-tRNA-synth_II/BPL/LPL"/>
</dbReference>
<dbReference type="InterPro" id="IPR004154">
    <property type="entry name" value="Anticodon-bd"/>
</dbReference>
<dbReference type="InterPro" id="IPR036621">
    <property type="entry name" value="Anticodon-bd_dom_sf"/>
</dbReference>
<dbReference type="InterPro" id="IPR002320">
    <property type="entry name" value="Thr-tRNA-ligase_IIa"/>
</dbReference>
<dbReference type="InterPro" id="IPR018163">
    <property type="entry name" value="Thr/Ala-tRNA-synth_IIc_edit"/>
</dbReference>
<dbReference type="InterPro" id="IPR047246">
    <property type="entry name" value="ThrRS_anticodon"/>
</dbReference>
<dbReference type="InterPro" id="IPR033728">
    <property type="entry name" value="ThrRS_core"/>
</dbReference>
<dbReference type="InterPro" id="IPR012947">
    <property type="entry name" value="tRNA_SAD"/>
</dbReference>
<dbReference type="NCBIfam" id="TIGR00418">
    <property type="entry name" value="thrS"/>
    <property type="match status" value="1"/>
</dbReference>
<dbReference type="PANTHER" id="PTHR11451:SF44">
    <property type="entry name" value="THREONINE--TRNA LIGASE, CHLOROPLASTIC_MITOCHONDRIAL 2"/>
    <property type="match status" value="1"/>
</dbReference>
<dbReference type="PANTHER" id="PTHR11451">
    <property type="entry name" value="THREONINE-TRNA LIGASE"/>
    <property type="match status" value="1"/>
</dbReference>
<dbReference type="Pfam" id="PF03129">
    <property type="entry name" value="HGTP_anticodon"/>
    <property type="match status" value="1"/>
</dbReference>
<dbReference type="Pfam" id="PF00587">
    <property type="entry name" value="tRNA-synt_2b"/>
    <property type="match status" value="1"/>
</dbReference>
<dbReference type="Pfam" id="PF07973">
    <property type="entry name" value="tRNA_SAD"/>
    <property type="match status" value="1"/>
</dbReference>
<dbReference type="PRINTS" id="PR01047">
    <property type="entry name" value="TRNASYNTHTHR"/>
</dbReference>
<dbReference type="SMART" id="SM00863">
    <property type="entry name" value="tRNA_SAD"/>
    <property type="match status" value="1"/>
</dbReference>
<dbReference type="SUPFAM" id="SSF52954">
    <property type="entry name" value="Class II aaRS ABD-related"/>
    <property type="match status" value="1"/>
</dbReference>
<dbReference type="SUPFAM" id="SSF55681">
    <property type="entry name" value="Class II aaRS and biotin synthetases"/>
    <property type="match status" value="1"/>
</dbReference>
<dbReference type="SUPFAM" id="SSF55186">
    <property type="entry name" value="ThrRS/AlaRS common domain"/>
    <property type="match status" value="1"/>
</dbReference>
<dbReference type="PROSITE" id="PS50862">
    <property type="entry name" value="AA_TRNA_LIGASE_II"/>
    <property type="match status" value="1"/>
</dbReference>
<accession>Q0I902</accession>
<sequence>MTGPEQEMVSSVAATTPAPIAPVVLPKTSESENLLKIRHSMSHVMAMAVQKLFPKAQVTIGPWTEAGFYYDFDNPEPFTEADLKAIKKEMGKIIGRKLPLERIEVSREEAERRIKAQNEPYKLEILERLVEPITLYTLGEQWWDLCAGPHVANTSELNPKAFELESVAGAYWRGDETKAQLQRIYGTAWETADQLSEHKRRKEEALRRDHRRLGKDLDLFSIEDEAGAGLVFWHPRGARMRLLIEDFWRQAHFEGGYELLYTPHVADISLWKTSGHLDFYAESMFGPMEVDERQYQLKPMNCPFHVLTYASKLRSYRELPIRWAELGTVYRYERPGVMHGLMRVRGFTQDDAHVFCLPEQISDEILRILNLTERILSTFDFSNYEINLSTKPDKAIGDDAVWELATKGLIEALKRKGWAYKIDEGGGAFYGPKIDLKIEDAIGRMWQCSTIQLDFNLPERFELDYIAADGSKQRPIMIHRAIFGSLERFFGIMTENYAGDFPFWLAPEQIRLLPVTDEVLGYAEEFQNQLKAAGIRASIDRSGDRLGKLIRIGEKMKIPVLAVIGAKEAEQGAASLRSRRDGDLGVITKERLIATAQSANQDRKASLSFDNSVSVEE</sequence>
<gene>
    <name evidence="1" type="primary">thrS</name>
    <name type="ordered locus">sync_1866</name>
</gene>
<protein>
    <recommendedName>
        <fullName evidence="1">Threonine--tRNA ligase</fullName>
        <ecNumber evidence="1">6.1.1.3</ecNumber>
    </recommendedName>
    <alternativeName>
        <fullName evidence="1">Threonyl-tRNA synthetase</fullName>
        <shortName evidence="1">ThrRS</shortName>
    </alternativeName>
</protein>
<keyword id="KW-0030">Aminoacyl-tRNA synthetase</keyword>
<keyword id="KW-0067">ATP-binding</keyword>
<keyword id="KW-0963">Cytoplasm</keyword>
<keyword id="KW-0436">Ligase</keyword>
<keyword id="KW-0479">Metal-binding</keyword>
<keyword id="KW-0547">Nucleotide-binding</keyword>
<keyword id="KW-0648">Protein biosynthesis</keyword>
<keyword id="KW-1185">Reference proteome</keyword>
<keyword id="KW-0694">RNA-binding</keyword>
<keyword id="KW-0820">tRNA-binding</keyword>
<keyword id="KW-0862">Zinc</keyword>
<proteinExistence type="inferred from homology"/>
<organism>
    <name type="scientific">Synechococcus sp. (strain CC9311)</name>
    <dbReference type="NCBI Taxonomy" id="64471"/>
    <lineage>
        <taxon>Bacteria</taxon>
        <taxon>Bacillati</taxon>
        <taxon>Cyanobacteriota</taxon>
        <taxon>Cyanophyceae</taxon>
        <taxon>Synechococcales</taxon>
        <taxon>Synechococcaceae</taxon>
        <taxon>Synechococcus</taxon>
    </lineage>
</organism>
<reference key="1">
    <citation type="journal article" date="2006" name="Proc. Natl. Acad. Sci. U.S.A.">
        <title>Genome sequence of Synechococcus CC9311: insights into adaptation to a coastal environment.</title>
        <authorList>
            <person name="Palenik B."/>
            <person name="Ren Q."/>
            <person name="Dupont C.L."/>
            <person name="Myers G.S."/>
            <person name="Heidelberg J.F."/>
            <person name="Badger J.H."/>
            <person name="Madupu R."/>
            <person name="Nelson W.C."/>
            <person name="Brinkac L.M."/>
            <person name="Dodson R.J."/>
            <person name="Durkin A.S."/>
            <person name="Daugherty S.C."/>
            <person name="Sullivan S.A."/>
            <person name="Khouri H."/>
            <person name="Mohamoud Y."/>
            <person name="Halpin R."/>
            <person name="Paulsen I.T."/>
        </authorList>
    </citation>
    <scope>NUCLEOTIDE SEQUENCE [LARGE SCALE GENOMIC DNA]</scope>
    <source>
        <strain>CC9311</strain>
    </source>
</reference>